<protein>
    <recommendedName>
        <fullName evidence="1">Adenylosuccinate synthetase</fullName>
        <shortName evidence="1">AMPSase</shortName>
        <shortName evidence="1">AdSS</shortName>
        <ecNumber evidence="1">6.3.4.4</ecNumber>
    </recommendedName>
    <alternativeName>
        <fullName evidence="1">IMP--aspartate ligase</fullName>
    </alternativeName>
</protein>
<dbReference type="EC" id="6.3.4.4" evidence="1"/>
<dbReference type="EMBL" id="CP000247">
    <property type="protein sequence ID" value="ABG72363.1"/>
    <property type="molecule type" value="Genomic_DNA"/>
</dbReference>
<dbReference type="RefSeq" id="WP_000527955.1">
    <property type="nucleotide sequence ID" value="NC_008253.1"/>
</dbReference>
<dbReference type="SMR" id="Q0T9L6"/>
<dbReference type="GeneID" id="75202411"/>
<dbReference type="KEGG" id="ecp:ECP_4422"/>
<dbReference type="HOGENOM" id="CLU_029848_0_0_6"/>
<dbReference type="UniPathway" id="UPA00075">
    <property type="reaction ID" value="UER00335"/>
</dbReference>
<dbReference type="Proteomes" id="UP000009182">
    <property type="component" value="Chromosome"/>
</dbReference>
<dbReference type="GO" id="GO:0005737">
    <property type="term" value="C:cytoplasm"/>
    <property type="evidence" value="ECO:0007669"/>
    <property type="project" value="UniProtKB-SubCell"/>
</dbReference>
<dbReference type="GO" id="GO:0004019">
    <property type="term" value="F:adenylosuccinate synthase activity"/>
    <property type="evidence" value="ECO:0007669"/>
    <property type="project" value="UniProtKB-UniRule"/>
</dbReference>
<dbReference type="GO" id="GO:0005525">
    <property type="term" value="F:GTP binding"/>
    <property type="evidence" value="ECO:0007669"/>
    <property type="project" value="UniProtKB-UniRule"/>
</dbReference>
<dbReference type="GO" id="GO:0000287">
    <property type="term" value="F:magnesium ion binding"/>
    <property type="evidence" value="ECO:0007669"/>
    <property type="project" value="UniProtKB-UniRule"/>
</dbReference>
<dbReference type="GO" id="GO:0044208">
    <property type="term" value="P:'de novo' AMP biosynthetic process"/>
    <property type="evidence" value="ECO:0007669"/>
    <property type="project" value="UniProtKB-UniRule"/>
</dbReference>
<dbReference type="GO" id="GO:0046040">
    <property type="term" value="P:IMP metabolic process"/>
    <property type="evidence" value="ECO:0007669"/>
    <property type="project" value="TreeGrafter"/>
</dbReference>
<dbReference type="CDD" id="cd03108">
    <property type="entry name" value="AdSS"/>
    <property type="match status" value="1"/>
</dbReference>
<dbReference type="FunFam" id="1.10.300.10:FF:000001">
    <property type="entry name" value="Adenylosuccinate synthetase"/>
    <property type="match status" value="1"/>
</dbReference>
<dbReference type="FunFam" id="3.90.170.10:FF:000001">
    <property type="entry name" value="Adenylosuccinate synthetase"/>
    <property type="match status" value="1"/>
</dbReference>
<dbReference type="Gene3D" id="3.40.440.10">
    <property type="entry name" value="Adenylosuccinate Synthetase, subunit A, domain 1"/>
    <property type="match status" value="1"/>
</dbReference>
<dbReference type="Gene3D" id="1.10.300.10">
    <property type="entry name" value="Adenylosuccinate Synthetase, subunit A, domain 2"/>
    <property type="match status" value="1"/>
</dbReference>
<dbReference type="Gene3D" id="3.90.170.10">
    <property type="entry name" value="Adenylosuccinate Synthetase, subunit A, domain 3"/>
    <property type="match status" value="1"/>
</dbReference>
<dbReference type="HAMAP" id="MF_00011">
    <property type="entry name" value="Adenylosucc_synth"/>
    <property type="match status" value="1"/>
</dbReference>
<dbReference type="InterPro" id="IPR018220">
    <property type="entry name" value="Adenylosuccin_syn_GTP-bd"/>
</dbReference>
<dbReference type="InterPro" id="IPR033128">
    <property type="entry name" value="Adenylosuccin_syn_Lys_AS"/>
</dbReference>
<dbReference type="InterPro" id="IPR042109">
    <property type="entry name" value="Adenylosuccinate_synth_dom1"/>
</dbReference>
<dbReference type="InterPro" id="IPR042110">
    <property type="entry name" value="Adenylosuccinate_synth_dom2"/>
</dbReference>
<dbReference type="InterPro" id="IPR042111">
    <property type="entry name" value="Adenylosuccinate_synth_dom3"/>
</dbReference>
<dbReference type="InterPro" id="IPR001114">
    <property type="entry name" value="Adenylosuccinate_synthetase"/>
</dbReference>
<dbReference type="InterPro" id="IPR027417">
    <property type="entry name" value="P-loop_NTPase"/>
</dbReference>
<dbReference type="NCBIfam" id="NF002223">
    <property type="entry name" value="PRK01117.1"/>
    <property type="match status" value="1"/>
</dbReference>
<dbReference type="NCBIfam" id="TIGR00184">
    <property type="entry name" value="purA"/>
    <property type="match status" value="1"/>
</dbReference>
<dbReference type="PANTHER" id="PTHR11846">
    <property type="entry name" value="ADENYLOSUCCINATE SYNTHETASE"/>
    <property type="match status" value="1"/>
</dbReference>
<dbReference type="PANTHER" id="PTHR11846:SF0">
    <property type="entry name" value="ADENYLOSUCCINATE SYNTHETASE"/>
    <property type="match status" value="1"/>
</dbReference>
<dbReference type="Pfam" id="PF00709">
    <property type="entry name" value="Adenylsucc_synt"/>
    <property type="match status" value="1"/>
</dbReference>
<dbReference type="SMART" id="SM00788">
    <property type="entry name" value="Adenylsucc_synt"/>
    <property type="match status" value="1"/>
</dbReference>
<dbReference type="SUPFAM" id="SSF52540">
    <property type="entry name" value="P-loop containing nucleoside triphosphate hydrolases"/>
    <property type="match status" value="1"/>
</dbReference>
<dbReference type="PROSITE" id="PS01266">
    <property type="entry name" value="ADENYLOSUCCIN_SYN_1"/>
    <property type="match status" value="1"/>
</dbReference>
<dbReference type="PROSITE" id="PS00513">
    <property type="entry name" value="ADENYLOSUCCIN_SYN_2"/>
    <property type="match status" value="1"/>
</dbReference>
<sequence>MGNNVVVLGTQWGDEGKGKIVDLLTERAKYVVRYQGGHNAGHTLVINGEKTVLHLIPSGILRENVTSIIGNGVVLSPAALMKEMKELEDRGIPVRERLLLSEACPLILDYHVALDNAREKARGAKAIGTTGRGIGPAYEDKVARRGLRVGDLFDKETFAEKLKEVMEYHNFQLVNYYKAEAVDYQKVLDDTMAVADILTSMVVDVSDLLDQARQRGDFVMFEGAQGTLLDIDHGTYPYVTSSNTTAGGVATGSGLGPRYVDYVLGILKAYSTRVGAGPFPTELFDETGEFLCKQGNEFGATTGRRRRTGWLDTVAVRRAVQLNSLSGFCLTKLDVLDGLKEVKLCVAYRMPDGREVTTTPLAADDWKGVEPIYETMPGWSESTFGVKDRSGLPQAALNYIKRIEELTGVPIDIISTGPDRTETMILRDPFDA</sequence>
<feature type="chain" id="PRO_1000000814" description="Adenylosuccinate synthetase">
    <location>
        <begin position="1"/>
        <end position="432"/>
    </location>
</feature>
<feature type="active site" description="Proton acceptor" evidence="1">
    <location>
        <position position="14"/>
    </location>
</feature>
<feature type="active site" description="Proton donor" evidence="1">
    <location>
        <position position="42"/>
    </location>
</feature>
<feature type="binding site" evidence="1">
    <location>
        <begin position="13"/>
        <end position="19"/>
    </location>
    <ligand>
        <name>GTP</name>
        <dbReference type="ChEBI" id="CHEBI:37565"/>
    </ligand>
</feature>
<feature type="binding site" description="in other chain" evidence="1">
    <location>
        <begin position="14"/>
        <end position="17"/>
    </location>
    <ligand>
        <name>IMP</name>
        <dbReference type="ChEBI" id="CHEBI:58053"/>
        <note>ligand shared between dimeric partners</note>
    </ligand>
</feature>
<feature type="binding site" evidence="1">
    <location>
        <position position="14"/>
    </location>
    <ligand>
        <name>Mg(2+)</name>
        <dbReference type="ChEBI" id="CHEBI:18420"/>
    </ligand>
</feature>
<feature type="binding site" description="in other chain" evidence="1">
    <location>
        <begin position="39"/>
        <end position="42"/>
    </location>
    <ligand>
        <name>IMP</name>
        <dbReference type="ChEBI" id="CHEBI:58053"/>
        <note>ligand shared between dimeric partners</note>
    </ligand>
</feature>
<feature type="binding site" evidence="1">
    <location>
        <begin position="41"/>
        <end position="43"/>
    </location>
    <ligand>
        <name>GTP</name>
        <dbReference type="ChEBI" id="CHEBI:37565"/>
    </ligand>
</feature>
<feature type="binding site" evidence="1">
    <location>
        <position position="41"/>
    </location>
    <ligand>
        <name>Mg(2+)</name>
        <dbReference type="ChEBI" id="CHEBI:18420"/>
    </ligand>
</feature>
<feature type="binding site" description="in other chain" evidence="1">
    <location>
        <position position="130"/>
    </location>
    <ligand>
        <name>IMP</name>
        <dbReference type="ChEBI" id="CHEBI:58053"/>
        <note>ligand shared between dimeric partners</note>
    </ligand>
</feature>
<feature type="binding site" evidence="1">
    <location>
        <position position="144"/>
    </location>
    <ligand>
        <name>IMP</name>
        <dbReference type="ChEBI" id="CHEBI:58053"/>
        <note>ligand shared between dimeric partners</note>
    </ligand>
</feature>
<feature type="binding site" description="in other chain" evidence="1">
    <location>
        <position position="225"/>
    </location>
    <ligand>
        <name>IMP</name>
        <dbReference type="ChEBI" id="CHEBI:58053"/>
        <note>ligand shared between dimeric partners</note>
    </ligand>
</feature>
<feature type="binding site" description="in other chain" evidence="1">
    <location>
        <position position="240"/>
    </location>
    <ligand>
        <name>IMP</name>
        <dbReference type="ChEBI" id="CHEBI:58053"/>
        <note>ligand shared between dimeric partners</note>
    </ligand>
</feature>
<feature type="binding site" evidence="1">
    <location>
        <begin position="300"/>
        <end position="306"/>
    </location>
    <ligand>
        <name>substrate</name>
    </ligand>
</feature>
<feature type="binding site" description="in other chain" evidence="1">
    <location>
        <position position="304"/>
    </location>
    <ligand>
        <name>IMP</name>
        <dbReference type="ChEBI" id="CHEBI:58053"/>
        <note>ligand shared between dimeric partners</note>
    </ligand>
</feature>
<feature type="binding site" evidence="1">
    <location>
        <position position="306"/>
    </location>
    <ligand>
        <name>GTP</name>
        <dbReference type="ChEBI" id="CHEBI:37565"/>
    </ligand>
</feature>
<feature type="binding site" evidence="1">
    <location>
        <begin position="332"/>
        <end position="334"/>
    </location>
    <ligand>
        <name>GTP</name>
        <dbReference type="ChEBI" id="CHEBI:37565"/>
    </ligand>
</feature>
<feature type="binding site" evidence="1">
    <location>
        <begin position="415"/>
        <end position="417"/>
    </location>
    <ligand>
        <name>GTP</name>
        <dbReference type="ChEBI" id="CHEBI:37565"/>
    </ligand>
</feature>
<name>PURA_ECOL5</name>
<reference key="1">
    <citation type="journal article" date="2006" name="Mol. Microbiol.">
        <title>Role of pathogenicity island-associated integrases in the genome plasticity of uropathogenic Escherichia coli strain 536.</title>
        <authorList>
            <person name="Hochhut B."/>
            <person name="Wilde C."/>
            <person name="Balling G."/>
            <person name="Middendorf B."/>
            <person name="Dobrindt U."/>
            <person name="Brzuszkiewicz E."/>
            <person name="Gottschalk G."/>
            <person name="Carniel E."/>
            <person name="Hacker J."/>
        </authorList>
    </citation>
    <scope>NUCLEOTIDE SEQUENCE [LARGE SCALE GENOMIC DNA]</scope>
    <source>
        <strain>536 / UPEC</strain>
    </source>
</reference>
<evidence type="ECO:0000255" key="1">
    <source>
        <dbReference type="HAMAP-Rule" id="MF_00011"/>
    </source>
</evidence>
<gene>
    <name evidence="1" type="primary">purA</name>
    <name type="ordered locus">ECP_4422</name>
</gene>
<organism>
    <name type="scientific">Escherichia coli O6:K15:H31 (strain 536 / UPEC)</name>
    <dbReference type="NCBI Taxonomy" id="362663"/>
    <lineage>
        <taxon>Bacteria</taxon>
        <taxon>Pseudomonadati</taxon>
        <taxon>Pseudomonadota</taxon>
        <taxon>Gammaproteobacteria</taxon>
        <taxon>Enterobacterales</taxon>
        <taxon>Enterobacteriaceae</taxon>
        <taxon>Escherichia</taxon>
    </lineage>
</organism>
<comment type="function">
    <text evidence="1">Plays an important role in the de novo pathway of purine nucleotide biosynthesis. Catalyzes the first committed step in the biosynthesis of AMP from IMP.</text>
</comment>
<comment type="catalytic activity">
    <reaction evidence="1">
        <text>IMP + L-aspartate + GTP = N(6)-(1,2-dicarboxyethyl)-AMP + GDP + phosphate + 2 H(+)</text>
        <dbReference type="Rhea" id="RHEA:15753"/>
        <dbReference type="ChEBI" id="CHEBI:15378"/>
        <dbReference type="ChEBI" id="CHEBI:29991"/>
        <dbReference type="ChEBI" id="CHEBI:37565"/>
        <dbReference type="ChEBI" id="CHEBI:43474"/>
        <dbReference type="ChEBI" id="CHEBI:57567"/>
        <dbReference type="ChEBI" id="CHEBI:58053"/>
        <dbReference type="ChEBI" id="CHEBI:58189"/>
        <dbReference type="EC" id="6.3.4.4"/>
    </reaction>
</comment>
<comment type="cofactor">
    <cofactor evidence="1">
        <name>Mg(2+)</name>
        <dbReference type="ChEBI" id="CHEBI:18420"/>
    </cofactor>
    <text evidence="1">Binds 1 Mg(2+) ion per subunit.</text>
</comment>
<comment type="pathway">
    <text evidence="1">Purine metabolism; AMP biosynthesis via de novo pathway; AMP from IMP: step 1/2.</text>
</comment>
<comment type="subunit">
    <text evidence="1">Homodimer.</text>
</comment>
<comment type="subcellular location">
    <subcellularLocation>
        <location evidence="1">Cytoplasm</location>
    </subcellularLocation>
</comment>
<comment type="similarity">
    <text evidence="1">Belongs to the adenylosuccinate synthetase family.</text>
</comment>
<accession>Q0T9L6</accession>
<keyword id="KW-0963">Cytoplasm</keyword>
<keyword id="KW-0342">GTP-binding</keyword>
<keyword id="KW-0436">Ligase</keyword>
<keyword id="KW-0460">Magnesium</keyword>
<keyword id="KW-0479">Metal-binding</keyword>
<keyword id="KW-0547">Nucleotide-binding</keyword>
<keyword id="KW-0658">Purine biosynthesis</keyword>
<proteinExistence type="inferred from homology"/>